<keyword id="KW-0067">ATP-binding</keyword>
<keyword id="KW-0315">Glutamine amidotransferase</keyword>
<keyword id="KW-0332">GMP biosynthesis</keyword>
<keyword id="KW-0436">Ligase</keyword>
<keyword id="KW-0547">Nucleotide-binding</keyword>
<keyword id="KW-0658">Purine biosynthesis</keyword>
<evidence type="ECO:0000255" key="1">
    <source>
        <dbReference type="HAMAP-Rule" id="MF_00344"/>
    </source>
</evidence>
<accession>A7WY93</accession>
<reference key="1">
    <citation type="journal article" date="2008" name="Antimicrob. Agents Chemother.">
        <title>Mutated response regulator graR is responsible for phenotypic conversion of Staphylococcus aureus from heterogeneous vancomycin-intermediate resistance to vancomycin-intermediate resistance.</title>
        <authorList>
            <person name="Neoh H.-M."/>
            <person name="Cui L."/>
            <person name="Yuzawa H."/>
            <person name="Takeuchi F."/>
            <person name="Matsuo M."/>
            <person name="Hiramatsu K."/>
        </authorList>
    </citation>
    <scope>NUCLEOTIDE SEQUENCE [LARGE SCALE GENOMIC DNA]</scope>
    <source>
        <strain>Mu3 / ATCC 700698</strain>
    </source>
</reference>
<comment type="function">
    <text evidence="1">Catalyzes the synthesis of GMP from XMP.</text>
</comment>
<comment type="catalytic activity">
    <reaction evidence="1">
        <text>XMP + L-glutamine + ATP + H2O = GMP + L-glutamate + AMP + diphosphate + 2 H(+)</text>
        <dbReference type="Rhea" id="RHEA:11680"/>
        <dbReference type="ChEBI" id="CHEBI:15377"/>
        <dbReference type="ChEBI" id="CHEBI:15378"/>
        <dbReference type="ChEBI" id="CHEBI:29985"/>
        <dbReference type="ChEBI" id="CHEBI:30616"/>
        <dbReference type="ChEBI" id="CHEBI:33019"/>
        <dbReference type="ChEBI" id="CHEBI:57464"/>
        <dbReference type="ChEBI" id="CHEBI:58115"/>
        <dbReference type="ChEBI" id="CHEBI:58359"/>
        <dbReference type="ChEBI" id="CHEBI:456215"/>
        <dbReference type="EC" id="6.3.5.2"/>
    </reaction>
</comment>
<comment type="pathway">
    <text evidence="1">Purine metabolism; GMP biosynthesis; GMP from XMP (L-Gln route): step 1/1.</text>
</comment>
<comment type="subunit">
    <text evidence="1">Homodimer.</text>
</comment>
<sequence>MEMAKEQELILVLDFGSQYNQLITRRIREMGVYSELHDHEISIEEIKKMNPKGIILSGGPNSVYEEGSFTIDPEIYNLGIPVLGICYGMQLTTKLLGGKVERANEREYGKAIINAKSDELFAGLPAEQTVWMSHSDKVIEIPEGFEVIADSPSTDYAAIEDKKRRIYGVQFHPEVRHTEYGNDLLNNFVRRVCDCKGQWTMENFIEIEIEKIRQRVGDRRVLCAMSGGVDSSVVAVLLHKAIGDQLTCIFVDHGLLRKGEGDMVMEQFGEGFNMNIIRVNAKDRFMNKLKGVSDPEQKRKIIGNEFVYVFDDEASKLKGVDFLAQGTLYTDVIESGTKTAQTIKSHHNVGGLPEDMEFELIEPINTLFKDEVRKLGIELGIPEHLVWRQPFPGPGLGIRVLGEITEDKLEIVRESDAILRQVIREEGLEREIWQYFTVLPNIQSVGVMGDYRTYDHTVGIRAVTSIDGMTSDFARIDWEVLQKISSRIVNEVDHVNRVVYDITSKPPSTIEWE</sequence>
<name>GUAA_STAA1</name>
<proteinExistence type="inferred from homology"/>
<feature type="chain" id="PRO_1000120419" description="GMP synthase [glutamine-hydrolyzing]">
    <location>
        <begin position="1"/>
        <end position="513"/>
    </location>
</feature>
<feature type="domain" description="Glutamine amidotransferase type-1" evidence="1">
    <location>
        <begin position="9"/>
        <end position="198"/>
    </location>
</feature>
<feature type="domain" description="GMPS ATP-PPase" evidence="1">
    <location>
        <begin position="199"/>
        <end position="388"/>
    </location>
</feature>
<feature type="active site" description="Nucleophile" evidence="1">
    <location>
        <position position="86"/>
    </location>
</feature>
<feature type="active site" evidence="1">
    <location>
        <position position="172"/>
    </location>
</feature>
<feature type="active site" evidence="1">
    <location>
        <position position="174"/>
    </location>
</feature>
<feature type="binding site" evidence="1">
    <location>
        <begin position="226"/>
        <end position="232"/>
    </location>
    <ligand>
        <name>ATP</name>
        <dbReference type="ChEBI" id="CHEBI:30616"/>
    </ligand>
</feature>
<organism>
    <name type="scientific">Staphylococcus aureus (strain Mu3 / ATCC 700698)</name>
    <dbReference type="NCBI Taxonomy" id="418127"/>
    <lineage>
        <taxon>Bacteria</taxon>
        <taxon>Bacillati</taxon>
        <taxon>Bacillota</taxon>
        <taxon>Bacilli</taxon>
        <taxon>Bacillales</taxon>
        <taxon>Staphylococcaceae</taxon>
        <taxon>Staphylococcus</taxon>
    </lineage>
</organism>
<gene>
    <name evidence="1" type="primary">guaA</name>
    <name type="ordered locus">SAHV_0388</name>
</gene>
<protein>
    <recommendedName>
        <fullName evidence="1">GMP synthase [glutamine-hydrolyzing]</fullName>
        <ecNumber evidence="1">6.3.5.2</ecNumber>
    </recommendedName>
    <alternativeName>
        <fullName evidence="1">GMP synthetase</fullName>
    </alternativeName>
    <alternativeName>
        <fullName evidence="1">Glutamine amidotransferase</fullName>
    </alternativeName>
</protein>
<dbReference type="EC" id="6.3.5.2" evidence="1"/>
<dbReference type="EMBL" id="AP009324">
    <property type="protein sequence ID" value="BAF77271.1"/>
    <property type="molecule type" value="Genomic_DNA"/>
</dbReference>
<dbReference type="RefSeq" id="WP_000424963.1">
    <property type="nucleotide sequence ID" value="NC_009782.1"/>
</dbReference>
<dbReference type="SMR" id="A7WY93"/>
<dbReference type="MEROPS" id="C26.957"/>
<dbReference type="GeneID" id="98344714"/>
<dbReference type="KEGG" id="saw:SAHV_0388"/>
<dbReference type="HOGENOM" id="CLU_014340_0_5_9"/>
<dbReference type="UniPathway" id="UPA00189">
    <property type="reaction ID" value="UER00296"/>
</dbReference>
<dbReference type="GO" id="GO:0005829">
    <property type="term" value="C:cytosol"/>
    <property type="evidence" value="ECO:0007669"/>
    <property type="project" value="TreeGrafter"/>
</dbReference>
<dbReference type="GO" id="GO:0005524">
    <property type="term" value="F:ATP binding"/>
    <property type="evidence" value="ECO:0007669"/>
    <property type="project" value="UniProtKB-UniRule"/>
</dbReference>
<dbReference type="GO" id="GO:0003921">
    <property type="term" value="F:GMP synthase activity"/>
    <property type="evidence" value="ECO:0007669"/>
    <property type="project" value="InterPro"/>
</dbReference>
<dbReference type="CDD" id="cd01742">
    <property type="entry name" value="GATase1_GMP_Synthase"/>
    <property type="match status" value="1"/>
</dbReference>
<dbReference type="CDD" id="cd01997">
    <property type="entry name" value="GMP_synthase_C"/>
    <property type="match status" value="1"/>
</dbReference>
<dbReference type="FunFam" id="3.30.300.10:FF:000002">
    <property type="entry name" value="GMP synthase [glutamine-hydrolyzing]"/>
    <property type="match status" value="1"/>
</dbReference>
<dbReference type="FunFam" id="3.40.50.620:FF:000001">
    <property type="entry name" value="GMP synthase [glutamine-hydrolyzing]"/>
    <property type="match status" value="1"/>
</dbReference>
<dbReference type="FunFam" id="3.40.50.880:FF:000001">
    <property type="entry name" value="GMP synthase [glutamine-hydrolyzing]"/>
    <property type="match status" value="1"/>
</dbReference>
<dbReference type="Gene3D" id="3.30.300.10">
    <property type="match status" value="1"/>
</dbReference>
<dbReference type="Gene3D" id="3.40.50.880">
    <property type="match status" value="1"/>
</dbReference>
<dbReference type="Gene3D" id="3.40.50.620">
    <property type="entry name" value="HUPs"/>
    <property type="match status" value="1"/>
</dbReference>
<dbReference type="HAMAP" id="MF_00344">
    <property type="entry name" value="GMP_synthase"/>
    <property type="match status" value="1"/>
</dbReference>
<dbReference type="InterPro" id="IPR029062">
    <property type="entry name" value="Class_I_gatase-like"/>
</dbReference>
<dbReference type="InterPro" id="IPR017926">
    <property type="entry name" value="GATASE"/>
</dbReference>
<dbReference type="InterPro" id="IPR001674">
    <property type="entry name" value="GMP_synth_C"/>
</dbReference>
<dbReference type="InterPro" id="IPR004739">
    <property type="entry name" value="GMP_synth_GATase"/>
</dbReference>
<dbReference type="InterPro" id="IPR022955">
    <property type="entry name" value="GMP_synthase"/>
</dbReference>
<dbReference type="InterPro" id="IPR025777">
    <property type="entry name" value="GMPS_ATP_PPase_dom"/>
</dbReference>
<dbReference type="InterPro" id="IPR014729">
    <property type="entry name" value="Rossmann-like_a/b/a_fold"/>
</dbReference>
<dbReference type="NCBIfam" id="TIGR00884">
    <property type="entry name" value="guaA_Cterm"/>
    <property type="match status" value="1"/>
</dbReference>
<dbReference type="NCBIfam" id="TIGR00888">
    <property type="entry name" value="guaA_Nterm"/>
    <property type="match status" value="1"/>
</dbReference>
<dbReference type="NCBIfam" id="NF000848">
    <property type="entry name" value="PRK00074.1"/>
    <property type="match status" value="1"/>
</dbReference>
<dbReference type="PANTHER" id="PTHR11922:SF2">
    <property type="entry name" value="GMP SYNTHASE [GLUTAMINE-HYDROLYZING]"/>
    <property type="match status" value="1"/>
</dbReference>
<dbReference type="PANTHER" id="PTHR11922">
    <property type="entry name" value="GMP SYNTHASE-RELATED"/>
    <property type="match status" value="1"/>
</dbReference>
<dbReference type="Pfam" id="PF00117">
    <property type="entry name" value="GATase"/>
    <property type="match status" value="1"/>
</dbReference>
<dbReference type="Pfam" id="PF00958">
    <property type="entry name" value="GMP_synt_C"/>
    <property type="match status" value="1"/>
</dbReference>
<dbReference type="Pfam" id="PF03054">
    <property type="entry name" value="tRNA_Me_trans"/>
    <property type="match status" value="1"/>
</dbReference>
<dbReference type="PRINTS" id="PR00097">
    <property type="entry name" value="ANTSNTHASEII"/>
</dbReference>
<dbReference type="PRINTS" id="PR00099">
    <property type="entry name" value="CPSGATASE"/>
</dbReference>
<dbReference type="PRINTS" id="PR00096">
    <property type="entry name" value="GATASE"/>
</dbReference>
<dbReference type="SUPFAM" id="SSF52402">
    <property type="entry name" value="Adenine nucleotide alpha hydrolases-like"/>
    <property type="match status" value="1"/>
</dbReference>
<dbReference type="SUPFAM" id="SSF52317">
    <property type="entry name" value="Class I glutamine amidotransferase-like"/>
    <property type="match status" value="1"/>
</dbReference>
<dbReference type="SUPFAM" id="SSF54810">
    <property type="entry name" value="GMP synthetase C-terminal dimerisation domain"/>
    <property type="match status" value="1"/>
</dbReference>
<dbReference type="PROSITE" id="PS51273">
    <property type="entry name" value="GATASE_TYPE_1"/>
    <property type="match status" value="1"/>
</dbReference>
<dbReference type="PROSITE" id="PS51553">
    <property type="entry name" value="GMPS_ATP_PPASE"/>
    <property type="match status" value="1"/>
</dbReference>